<evidence type="ECO:0000255" key="1"/>
<evidence type="ECO:0000305" key="2"/>
<accession>P07775</accession>
<accession>Q6FCA7</accession>
<sequence>MTTLLKTLKQDWSLSATIAGFLAVLISYSGPLIIFFQAAQKAHVSTEMMISWIWAISIGAAVTGIFLSIRFKTPVVTAWSAPGTALLVTLFPNISLNEAVAAYITAAIVIFLVGITGYFDKLLKWIPQGIAAGMMAGILFQFGLGLFLATDTLPLIVFSMLLCYLISRRFSPRYCMLWVLICGVAFSFFLGKMNPVPLDFQIARPQFIAPEWSWFSTLNLALPLILVSLTGQFLPGMAILKLSGYNTPAKPIIAAASLASLFAAFAGGITIVLASITATLCMGKDAHELKDKRYIAGIANGLFYVLGGVFAGSIVALFSLLPKELVAALAGLALLGAIASNIKIAMQEDQQRDPALITFLATVSGMHFLGLSSVFWGMCIGMLAYFILLKPKAS</sequence>
<proteinExistence type="predicted"/>
<keyword id="KW-0058">Aromatic hydrocarbons catabolism</keyword>
<keyword id="KW-1003">Cell membrane</keyword>
<keyword id="KW-0472">Membrane</keyword>
<keyword id="KW-0812">Transmembrane</keyword>
<keyword id="KW-1133">Transmembrane helix</keyword>
<keyword id="KW-0813">Transport</keyword>
<reference key="1">
    <citation type="journal article" date="1991" name="J. Bacteriol.">
        <title>Nucleotide sequences of the Acinetobacter calcoaceticus benABC genes for benzoate 1,2-dioxygenase reveal evolutionary relationships among multicomponent oxygenases.</title>
        <authorList>
            <person name="Neidle E.L."/>
            <person name="Hartnett C."/>
            <person name="Ornston N.L."/>
            <person name="Bairoch A."/>
            <person name="Rekik M."/>
            <person name="Harayama S."/>
        </authorList>
    </citation>
    <scope>NUCLEOTIDE SEQUENCE [GENOMIC DNA]</scope>
</reference>
<reference key="2">
    <citation type="journal article" date="2004" name="Nucleic Acids Res.">
        <title>Unique features revealed by the genome sequence of Acinetobacter sp. ADP1, a versatile and naturally transformation competent bacterium.</title>
        <authorList>
            <person name="Barbe V."/>
            <person name="Vallenet D."/>
            <person name="Fonknechten N."/>
            <person name="Kreimeyer A."/>
            <person name="Oztas S."/>
            <person name="Labarre L."/>
            <person name="Cruveiller S."/>
            <person name="Robert C."/>
            <person name="Duprat S."/>
            <person name="Wincker P."/>
            <person name="Ornston L.N."/>
            <person name="Weissenbach J."/>
            <person name="Marliere P."/>
            <person name="Cohen G.N."/>
            <person name="Medigue C."/>
        </authorList>
    </citation>
    <scope>NUCLEOTIDE SEQUENCE [LARGE SCALE GENOMIC DNA]</scope>
    <source>
        <strain>ATCC 33305 / BD413 / ADP1</strain>
    </source>
</reference>
<protein>
    <recommendedName>
        <fullName>Benzoate membrane transport protein</fullName>
    </recommendedName>
</protein>
<name>BENE_ACIAD</name>
<organism>
    <name type="scientific">Acinetobacter baylyi (strain ATCC 33305 / BD413 / ADP1)</name>
    <dbReference type="NCBI Taxonomy" id="62977"/>
    <lineage>
        <taxon>Bacteria</taxon>
        <taxon>Pseudomonadati</taxon>
        <taxon>Pseudomonadota</taxon>
        <taxon>Gammaproteobacteria</taxon>
        <taxon>Moraxellales</taxon>
        <taxon>Moraxellaceae</taxon>
        <taxon>Acinetobacter</taxon>
    </lineage>
</organism>
<feature type="chain" id="PRO_0000064911" description="Benzoate membrane transport protein">
    <location>
        <begin position="1"/>
        <end position="394"/>
    </location>
</feature>
<feature type="transmembrane region" description="Helical" evidence="1">
    <location>
        <begin position="16"/>
        <end position="36"/>
    </location>
</feature>
<feature type="transmembrane region" description="Helical" evidence="1">
    <location>
        <begin position="49"/>
        <end position="69"/>
    </location>
</feature>
<feature type="transmembrane region" description="Helical" evidence="1">
    <location>
        <begin position="74"/>
        <end position="94"/>
    </location>
</feature>
<feature type="transmembrane region" description="Helical" evidence="1">
    <location>
        <begin position="99"/>
        <end position="119"/>
    </location>
</feature>
<feature type="transmembrane region" description="Helical" evidence="1">
    <location>
        <begin position="139"/>
        <end position="161"/>
    </location>
</feature>
<feature type="transmembrane region" description="Helical" evidence="1">
    <location>
        <begin position="176"/>
        <end position="196"/>
    </location>
</feature>
<feature type="transmembrane region" description="Helical" evidence="1">
    <location>
        <begin position="220"/>
        <end position="240"/>
    </location>
</feature>
<feature type="transmembrane region" description="Helical" evidence="1">
    <location>
        <begin position="252"/>
        <end position="272"/>
    </location>
</feature>
<feature type="transmembrane region" description="Helical" evidence="1">
    <location>
        <begin position="301"/>
        <end position="321"/>
    </location>
</feature>
<feature type="transmembrane region" description="Helical" evidence="1">
    <location>
        <begin position="325"/>
        <end position="345"/>
    </location>
</feature>
<feature type="transmembrane region" description="Helical" evidence="1">
    <location>
        <begin position="368"/>
        <end position="388"/>
    </location>
</feature>
<comment type="function">
    <text>Probably involved in the transport of benzoate.</text>
</comment>
<comment type="subcellular location">
    <subcellularLocation>
        <location>Cell membrane</location>
        <topology>Multi-pass membrane protein</topology>
    </subcellularLocation>
</comment>
<comment type="miscellaneous">
    <text>The ben operon encode the proteins responsible for the degradation of benzoate to catechol.</text>
</comment>
<comment type="sequence caution" evidence="2">
    <conflict type="erroneous initiation">
        <sequence resource="EMBL-CDS" id="CAG68304"/>
    </conflict>
</comment>
<dbReference type="EMBL" id="AF009224">
    <property type="protein sequence ID" value="AAC46440.1"/>
    <property type="molecule type" value="Genomic_DNA"/>
</dbReference>
<dbReference type="EMBL" id="CR543861">
    <property type="protein sequence ID" value="CAG68304.1"/>
    <property type="status" value="ALT_INIT"/>
    <property type="molecule type" value="Genomic_DNA"/>
</dbReference>
<dbReference type="PIR" id="S23481">
    <property type="entry name" value="S23481"/>
</dbReference>
<dbReference type="RefSeq" id="WP_004925476.1">
    <property type="nucleotide sequence ID" value="NC_005966.1"/>
</dbReference>
<dbReference type="SMR" id="P07775"/>
<dbReference type="STRING" id="202950.GCA_001485005_01195"/>
<dbReference type="TCDB" id="2.A.46.1.1">
    <property type="family name" value="the benzoate:h+ symporter (bene) family"/>
</dbReference>
<dbReference type="GeneID" id="45233853"/>
<dbReference type="KEGG" id="aci:ACIAD1440"/>
<dbReference type="eggNOG" id="COG3135">
    <property type="taxonomic scope" value="Bacteria"/>
</dbReference>
<dbReference type="HOGENOM" id="CLU_041268_2_0_6"/>
<dbReference type="OrthoDB" id="9792424at2"/>
<dbReference type="BioCyc" id="ASP62977:ACIAD_RS06655-MONOMER"/>
<dbReference type="Proteomes" id="UP000000430">
    <property type="component" value="Chromosome"/>
</dbReference>
<dbReference type="GO" id="GO:0005886">
    <property type="term" value="C:plasma membrane"/>
    <property type="evidence" value="ECO:0007669"/>
    <property type="project" value="UniProtKB-SubCell"/>
</dbReference>
<dbReference type="GO" id="GO:0042925">
    <property type="term" value="F:benzoate transmembrane transporter activity"/>
    <property type="evidence" value="ECO:0007669"/>
    <property type="project" value="InterPro"/>
</dbReference>
<dbReference type="GO" id="GO:0009056">
    <property type="term" value="P:catabolic process"/>
    <property type="evidence" value="ECO:0007669"/>
    <property type="project" value="UniProtKB-KW"/>
</dbReference>
<dbReference type="InterPro" id="IPR004711">
    <property type="entry name" value="Benzoate_Transporter"/>
</dbReference>
<dbReference type="NCBIfam" id="TIGR00843">
    <property type="entry name" value="benE"/>
    <property type="match status" value="1"/>
</dbReference>
<dbReference type="PANTHER" id="PTHR30199:SF0">
    <property type="entry name" value="INNER MEMBRANE PROTEIN YDCO"/>
    <property type="match status" value="1"/>
</dbReference>
<dbReference type="PANTHER" id="PTHR30199">
    <property type="entry name" value="MFS FAMILY TRANSPORTER, PREDICTED SUBSTRATE BENZOATE"/>
    <property type="match status" value="1"/>
</dbReference>
<dbReference type="Pfam" id="PF03594">
    <property type="entry name" value="BenE"/>
    <property type="match status" value="1"/>
</dbReference>
<gene>
    <name type="primary">benE</name>
    <name type="ordered locus">ACIAD1440</name>
</gene>